<proteinExistence type="uncertain"/>
<organism>
    <name type="scientific">Homo sapiens</name>
    <name type="common">Human</name>
    <dbReference type="NCBI Taxonomy" id="9606"/>
    <lineage>
        <taxon>Eukaryota</taxon>
        <taxon>Metazoa</taxon>
        <taxon>Chordata</taxon>
        <taxon>Craniata</taxon>
        <taxon>Vertebrata</taxon>
        <taxon>Euteleostomi</taxon>
        <taxon>Mammalia</taxon>
        <taxon>Eutheria</taxon>
        <taxon>Euarchontoglires</taxon>
        <taxon>Primates</taxon>
        <taxon>Haplorrhini</taxon>
        <taxon>Catarrhini</taxon>
        <taxon>Hominidae</taxon>
        <taxon>Homo</taxon>
    </lineage>
</organism>
<name>HILS1_HUMAN</name>
<sequence>MLHASTIWHLRSTPPRRKQWGHCDPHRILVASEVTTEITSPTPAPRAQVCGGQPWVTVLDPLSGHTGREAERHFATVSISAVELKYCHGWRPAGQRVPSKTATGQRTCAKPCQKPSTSKVILRAVADKGTCKYVSLATLKKAVSTTGYDMARNAYHFKRVLKGLVDKGSAGSFTLGKKQASKSKLKVKRQRQQRWRSGQRPFGQHRSLLGSKQGHKRLIKGVRRVAKCHCN</sequence>
<keyword id="KW-0156">Chromatin regulator</keyword>
<keyword id="KW-0158">Chromosome</keyword>
<keyword id="KW-0217">Developmental protein</keyword>
<keyword id="KW-0221">Differentiation</keyword>
<keyword id="KW-0238">DNA-binding</keyword>
<keyword id="KW-0539">Nucleus</keyword>
<keyword id="KW-0597">Phosphoprotein</keyword>
<keyword id="KW-1185">Reference proteome</keyword>
<keyword id="KW-0744">Spermatogenesis</keyword>
<keyword id="KW-0804">Transcription</keyword>
<keyword id="KW-0805">Transcription regulation</keyword>
<evidence type="ECO:0000250" key="1">
    <source>
        <dbReference type="UniProtKB" id="D3ZZW6"/>
    </source>
</evidence>
<evidence type="ECO:0000250" key="2">
    <source>
        <dbReference type="UniProtKB" id="Q9QYL0"/>
    </source>
</evidence>
<evidence type="ECO:0000255" key="3">
    <source>
        <dbReference type="PROSITE-ProRule" id="PRU00837"/>
    </source>
</evidence>
<evidence type="ECO:0000256" key="4">
    <source>
        <dbReference type="SAM" id="MobiDB-lite"/>
    </source>
</evidence>
<evidence type="ECO:0000269" key="5">
    <source>
    </source>
</evidence>
<evidence type="ECO:0000305" key="6"/>
<evidence type="ECO:0000305" key="7">
    <source>
    </source>
</evidence>
<evidence type="ECO:0000312" key="8">
    <source>
        <dbReference type="HGNC" id="HGNC:30616"/>
    </source>
</evidence>
<feature type="chain" id="PRO_0000196014" description="Putative histone H1.9">
    <location>
        <begin position="1"/>
        <end position="231"/>
    </location>
</feature>
<feature type="domain" description="H15" evidence="3">
    <location>
        <begin position="113"/>
        <end position="177"/>
    </location>
</feature>
<feature type="region of interest" description="Disordered" evidence="4">
    <location>
        <begin position="177"/>
        <end position="214"/>
    </location>
</feature>
<feature type="compositionally biased region" description="Basic residues" evidence="4">
    <location>
        <begin position="179"/>
        <end position="194"/>
    </location>
</feature>
<feature type="modified residue" description="Phosphoserine" evidence="1">
    <location>
        <position position="135"/>
    </location>
</feature>
<comment type="function">
    <text evidence="2">DNA-binding protein that may be implicated in chromatin remodeling and/or transcriptional regulation during spermiogenesis, the process of spermatid maturation into spermatozoa.</text>
</comment>
<comment type="subcellular location">
    <subcellularLocation>
        <location evidence="3">Nucleus</location>
    </subcellularLocation>
    <subcellularLocation>
        <location evidence="3">Chromosome</location>
    </subcellularLocation>
</comment>
<comment type="tissue specificity">
    <text evidence="5">Expressed exclusively in the testis.</text>
</comment>
<comment type="similarity">
    <text evidence="3">Belongs to the histone H1/H5 family.</text>
</comment>
<comment type="caution">
    <text evidence="7">Could be the product of a pseudogene. However, mouse (AC Q9QYL0) and rat (AC D3ZZW6) orthologs encode functional proteins.</text>
</comment>
<accession>P60008</accession>
<gene>
    <name evidence="8" type="primary">H1-9P</name>
    <name evidence="8" type="synonym">H1-9</name>
    <name evidence="8" type="synonym">HILS1</name>
</gene>
<dbReference type="EMBL" id="AY286318">
    <property type="protein sequence ID" value="AAQ23050.1"/>
    <property type="molecule type" value="mRNA"/>
</dbReference>
<dbReference type="SMR" id="P60008"/>
<dbReference type="FunCoup" id="P60008">
    <property type="interactions" value="171"/>
</dbReference>
<dbReference type="IntAct" id="P60008">
    <property type="interactions" value="1"/>
</dbReference>
<dbReference type="GlyGen" id="P60008">
    <property type="glycosylation" value="1 site"/>
</dbReference>
<dbReference type="iPTMnet" id="P60008"/>
<dbReference type="PhosphoSitePlus" id="P60008"/>
<dbReference type="BioMuta" id="HGNC:30616"/>
<dbReference type="DMDM" id="38372285"/>
<dbReference type="AGR" id="HGNC:30616"/>
<dbReference type="GeneCards" id="H1-9P"/>
<dbReference type="HGNC" id="HGNC:30616">
    <property type="gene designation" value="H1-9P"/>
</dbReference>
<dbReference type="MIM" id="608101">
    <property type="type" value="gene"/>
</dbReference>
<dbReference type="neXtProt" id="NX_P60008"/>
<dbReference type="InParanoid" id="P60008"/>
<dbReference type="PAN-GO" id="P60008">
    <property type="GO annotations" value="5 GO annotations based on evolutionary models"/>
</dbReference>
<dbReference type="PhylomeDB" id="P60008"/>
<dbReference type="PathwayCommons" id="P60008"/>
<dbReference type="Pharos" id="P60008">
    <property type="development level" value="Tbio"/>
</dbReference>
<dbReference type="PRO" id="PR:P60008"/>
<dbReference type="Proteomes" id="UP000005640">
    <property type="component" value="Unplaced"/>
</dbReference>
<dbReference type="RNAct" id="P60008">
    <property type="molecule type" value="protein"/>
</dbReference>
<dbReference type="GO" id="GO:0001673">
    <property type="term" value="C:male germ cell nucleus"/>
    <property type="evidence" value="ECO:0000314"/>
    <property type="project" value="UniProtKB"/>
</dbReference>
<dbReference type="GO" id="GO:0000786">
    <property type="term" value="C:nucleosome"/>
    <property type="evidence" value="ECO:0000314"/>
    <property type="project" value="UniProtKB"/>
</dbReference>
<dbReference type="GO" id="GO:0005634">
    <property type="term" value="C:nucleus"/>
    <property type="evidence" value="ECO:0000318"/>
    <property type="project" value="GO_Central"/>
</dbReference>
<dbReference type="GO" id="GO:0003690">
    <property type="term" value="F:double-stranded DNA binding"/>
    <property type="evidence" value="ECO:0000318"/>
    <property type="project" value="GO_Central"/>
</dbReference>
<dbReference type="GO" id="GO:0042393">
    <property type="term" value="F:histone binding"/>
    <property type="evidence" value="ECO:0000314"/>
    <property type="project" value="UniProtKB"/>
</dbReference>
<dbReference type="GO" id="GO:0003676">
    <property type="term" value="F:nucleic acid binding"/>
    <property type="evidence" value="ECO:0000314"/>
    <property type="project" value="UniProtKB"/>
</dbReference>
<dbReference type="GO" id="GO:0031492">
    <property type="term" value="F:nucleosomal DNA binding"/>
    <property type="evidence" value="ECO:0000318"/>
    <property type="project" value="GO_Central"/>
</dbReference>
<dbReference type="GO" id="GO:0006338">
    <property type="term" value="P:chromatin remodeling"/>
    <property type="evidence" value="ECO:0000303"/>
    <property type="project" value="UniProtKB"/>
</dbReference>
<dbReference type="GO" id="GO:0030261">
    <property type="term" value="P:chromosome condensation"/>
    <property type="evidence" value="ECO:0000314"/>
    <property type="project" value="UniProtKB"/>
</dbReference>
<dbReference type="GO" id="GO:0007281">
    <property type="term" value="P:germ cell development"/>
    <property type="evidence" value="ECO:0000314"/>
    <property type="project" value="UniProtKB"/>
</dbReference>
<dbReference type="GO" id="GO:0031507">
    <property type="term" value="P:heterochromatin formation"/>
    <property type="evidence" value="ECO:0000314"/>
    <property type="project" value="UniProtKB"/>
</dbReference>
<dbReference type="GO" id="GO:0045910">
    <property type="term" value="P:negative regulation of DNA recombination"/>
    <property type="evidence" value="ECO:0000318"/>
    <property type="project" value="GO_Central"/>
</dbReference>
<dbReference type="GO" id="GO:0006334">
    <property type="term" value="P:nucleosome assembly"/>
    <property type="evidence" value="ECO:0007669"/>
    <property type="project" value="InterPro"/>
</dbReference>
<dbReference type="GO" id="GO:0006355">
    <property type="term" value="P:regulation of DNA-templated transcription"/>
    <property type="evidence" value="ECO:0000303"/>
    <property type="project" value="UniProtKB"/>
</dbReference>
<dbReference type="GO" id="GO:0007283">
    <property type="term" value="P:spermatogenesis"/>
    <property type="evidence" value="ECO:0000314"/>
    <property type="project" value="UniProtKB"/>
</dbReference>
<dbReference type="FunFam" id="1.10.10.10:FF:000724">
    <property type="entry name" value="Histone H1-like protein in spermatids 1"/>
    <property type="match status" value="1"/>
</dbReference>
<dbReference type="Gene3D" id="1.10.10.10">
    <property type="entry name" value="Winged helix-like DNA-binding domain superfamily/Winged helix DNA-binding domain"/>
    <property type="match status" value="1"/>
</dbReference>
<dbReference type="InterPro" id="IPR005818">
    <property type="entry name" value="Histone_H1/H5_H15"/>
</dbReference>
<dbReference type="InterPro" id="IPR036388">
    <property type="entry name" value="WH-like_DNA-bd_sf"/>
</dbReference>
<dbReference type="InterPro" id="IPR036390">
    <property type="entry name" value="WH_DNA-bd_sf"/>
</dbReference>
<dbReference type="Pfam" id="PF00538">
    <property type="entry name" value="Linker_histone"/>
    <property type="match status" value="1"/>
</dbReference>
<dbReference type="SUPFAM" id="SSF46785">
    <property type="entry name" value="Winged helix' DNA-binding domain"/>
    <property type="match status" value="1"/>
</dbReference>
<dbReference type="PROSITE" id="PS51504">
    <property type="entry name" value="H15"/>
    <property type="match status" value="1"/>
</dbReference>
<reference key="1">
    <citation type="journal article" date="2003" name="Proc. Natl. Acad. Sci. U.S.A.">
        <title>HILS1 is a spermatid-specific linker histone H1-like protein implicated in chromatin remodeling during mammalian spermiogenesis.</title>
        <authorList>
            <person name="Yan W."/>
            <person name="Ma L."/>
            <person name="Burns K.H."/>
            <person name="Matzuk M.M."/>
        </authorList>
    </citation>
    <scope>NUCLEOTIDE SEQUENCE [MRNA]</scope>
    <scope>CAUTION</scope>
    <scope>TISSUE SPECIFICITY</scope>
    <source>
        <tissue>Testis</tissue>
    </source>
</reference>
<protein>
    <recommendedName>
        <fullName evidence="6">Putative histone H1.9</fullName>
    </recommendedName>
    <alternativeName>
        <fullName evidence="8">H1.9 linker histone pseudogene</fullName>
    </alternativeName>
    <alternativeName>
        <fullName evidence="6">Putative spermatid-specific linker histone H1-like protein</fullName>
    </alternativeName>
</protein>